<sequence>LNPKKKENNGVKNGDREKQHETGNTIFRGSPDKYLTEQGWMAQSDLGSRALVEDLVRYKLCQRSLVPEPSGAASCALHSAMRAAGDEFEERFRQAFSEISTQIHVTPGTAYARFAEVAGSLFQGGVNWGRIVAFFVFGAALCAESVNKEMSPLLPRIQDWMVTYLETNLRDWIQSNGGWNGFLTLYGDGAIEEARRQREGNWASLKTVLTGAVALGALMTVGALFASK</sequence>
<organism>
    <name type="scientific">Xenopus laevis</name>
    <name type="common">African clawed frog</name>
    <dbReference type="NCBI Taxonomy" id="8355"/>
    <lineage>
        <taxon>Eukaryota</taxon>
        <taxon>Metazoa</taxon>
        <taxon>Chordata</taxon>
        <taxon>Craniata</taxon>
        <taxon>Vertebrata</taxon>
        <taxon>Euteleostomi</taxon>
        <taxon>Amphibia</taxon>
        <taxon>Batrachia</taxon>
        <taxon>Anura</taxon>
        <taxon>Pipoidea</taxon>
        <taxon>Pipidae</taxon>
        <taxon>Xenopodinae</taxon>
        <taxon>Xenopus</taxon>
        <taxon>Xenopus</taxon>
    </lineage>
</organism>
<protein>
    <recommendedName>
        <fullName>Apoptosis regulator R1</fullName>
    </recommendedName>
    <alternativeName>
        <fullName>XR1</fullName>
    </alternativeName>
</protein>
<name>AR1_XENLA</name>
<feature type="chain" id="PRO_0000143098" description="Apoptosis regulator R1">
    <location>
        <begin position="1" status="less than"/>
        <end position="228"/>
    </location>
</feature>
<feature type="transmembrane region" description="Helical" evidence="1">
    <location>
        <begin position="207"/>
        <end position="227"/>
    </location>
</feature>
<feature type="region of interest" description="Disordered" evidence="2">
    <location>
        <begin position="1"/>
        <end position="29"/>
    </location>
</feature>
<feature type="short sequence motif" description="BH1">
    <location>
        <begin position="120"/>
        <end position="139"/>
    </location>
</feature>
<feature type="short sequence motif" description="BH2">
    <location>
        <begin position="171"/>
        <end position="186"/>
    </location>
</feature>
<feature type="compositionally biased region" description="Basic and acidic residues" evidence="2">
    <location>
        <begin position="1"/>
        <end position="21"/>
    </location>
</feature>
<feature type="non-terminal residue">
    <location>
        <position position="1"/>
    </location>
</feature>
<dbReference type="EMBL" id="X82462">
    <property type="protein sequence ID" value="CAA57845.1"/>
    <property type="molecule type" value="mRNA"/>
</dbReference>
<dbReference type="RefSeq" id="NP_001081573.2">
    <property type="nucleotide sequence ID" value="NM_001088104.1"/>
</dbReference>
<dbReference type="SMR" id="Q91827"/>
<dbReference type="GeneID" id="397930"/>
<dbReference type="KEGG" id="xla:397930"/>
<dbReference type="AGR" id="Xenbase:XB-GENE-6252167"/>
<dbReference type="CTD" id="397930"/>
<dbReference type="Xenbase" id="XB-GENE-6252167">
    <property type="gene designation" value="bcl2l2.S"/>
</dbReference>
<dbReference type="OrthoDB" id="4726at2759"/>
<dbReference type="Proteomes" id="UP000186698">
    <property type="component" value="Chromosome 1S"/>
</dbReference>
<dbReference type="Bgee" id="397930">
    <property type="expression patterns" value="Expressed in brain and 19 other cell types or tissues"/>
</dbReference>
<dbReference type="GO" id="GO:0005741">
    <property type="term" value="C:mitochondrial outer membrane"/>
    <property type="evidence" value="ECO:0000318"/>
    <property type="project" value="GO_Central"/>
</dbReference>
<dbReference type="GO" id="GO:0051400">
    <property type="term" value="F:BH domain binding"/>
    <property type="evidence" value="ECO:0007669"/>
    <property type="project" value="TreeGrafter"/>
</dbReference>
<dbReference type="GO" id="GO:0015267">
    <property type="term" value="F:channel activity"/>
    <property type="evidence" value="ECO:0000318"/>
    <property type="project" value="GO_Central"/>
</dbReference>
<dbReference type="GO" id="GO:0097192">
    <property type="term" value="P:extrinsic apoptotic signaling pathway in absence of ligand"/>
    <property type="evidence" value="ECO:0000318"/>
    <property type="project" value="GO_Central"/>
</dbReference>
<dbReference type="GO" id="GO:0008630">
    <property type="term" value="P:intrinsic apoptotic signaling pathway in response to DNA damage"/>
    <property type="evidence" value="ECO:0000318"/>
    <property type="project" value="GO_Central"/>
</dbReference>
<dbReference type="GO" id="GO:0043065">
    <property type="term" value="P:positive regulation of apoptotic process"/>
    <property type="evidence" value="ECO:0000318"/>
    <property type="project" value="GO_Central"/>
</dbReference>
<dbReference type="GO" id="GO:0001836">
    <property type="term" value="P:release of cytochrome c from mitochondria"/>
    <property type="evidence" value="ECO:0000318"/>
    <property type="project" value="GO_Central"/>
</dbReference>
<dbReference type="CDD" id="cd06845">
    <property type="entry name" value="Bcl-2_like"/>
    <property type="match status" value="1"/>
</dbReference>
<dbReference type="Gene3D" id="1.10.437.10">
    <property type="entry name" value="Blc2-like"/>
    <property type="match status" value="1"/>
</dbReference>
<dbReference type="InterPro" id="IPR013280">
    <property type="entry name" value="Apop_reg_BclW"/>
</dbReference>
<dbReference type="InterPro" id="IPR036834">
    <property type="entry name" value="Bcl-2-like_sf"/>
</dbReference>
<dbReference type="InterPro" id="IPR046371">
    <property type="entry name" value="Bcl-2_BH1-3"/>
</dbReference>
<dbReference type="InterPro" id="IPR026298">
    <property type="entry name" value="Bcl-2_fam"/>
</dbReference>
<dbReference type="InterPro" id="IPR002475">
    <property type="entry name" value="Bcl2-like"/>
</dbReference>
<dbReference type="InterPro" id="IPR020717">
    <property type="entry name" value="Bcl2_BH1_motif_CS"/>
</dbReference>
<dbReference type="InterPro" id="IPR020726">
    <property type="entry name" value="Bcl2_BH2_motif_CS"/>
</dbReference>
<dbReference type="InterPro" id="IPR003093">
    <property type="entry name" value="Bcl2_BH4"/>
</dbReference>
<dbReference type="PANTHER" id="PTHR11256">
    <property type="entry name" value="BCL-2 RELATED"/>
    <property type="match status" value="1"/>
</dbReference>
<dbReference type="PANTHER" id="PTHR11256:SF13">
    <property type="entry name" value="BCL-2-LIKE PROTEIN 2"/>
    <property type="match status" value="1"/>
</dbReference>
<dbReference type="Pfam" id="PF00452">
    <property type="entry name" value="Bcl-2"/>
    <property type="match status" value="1"/>
</dbReference>
<dbReference type="Pfam" id="PF02180">
    <property type="entry name" value="BH4"/>
    <property type="match status" value="1"/>
</dbReference>
<dbReference type="PRINTS" id="PR01865">
    <property type="entry name" value="APOPREGBCLW"/>
</dbReference>
<dbReference type="PRINTS" id="PR01862">
    <property type="entry name" value="BCL2FAMILY"/>
</dbReference>
<dbReference type="SMART" id="SM00337">
    <property type="entry name" value="BCL"/>
    <property type="match status" value="1"/>
</dbReference>
<dbReference type="SMART" id="SM00265">
    <property type="entry name" value="BH4"/>
    <property type="match status" value="1"/>
</dbReference>
<dbReference type="SUPFAM" id="SSF56854">
    <property type="entry name" value="Bcl-2 inhibitors of programmed cell death"/>
    <property type="match status" value="1"/>
</dbReference>
<dbReference type="PROSITE" id="PS50062">
    <property type="entry name" value="BCL2_FAMILY"/>
    <property type="match status" value="1"/>
</dbReference>
<dbReference type="PROSITE" id="PS01080">
    <property type="entry name" value="BH1"/>
    <property type="match status" value="1"/>
</dbReference>
<dbReference type="PROSITE" id="PS01258">
    <property type="entry name" value="BH2"/>
    <property type="match status" value="1"/>
</dbReference>
<accession>Q91827</accession>
<proteinExistence type="evidence at transcript level"/>
<evidence type="ECO:0000255" key="1"/>
<evidence type="ECO:0000256" key="2">
    <source>
        <dbReference type="SAM" id="MobiDB-lite"/>
    </source>
</evidence>
<evidence type="ECO:0000305" key="3"/>
<reference key="1">
    <citation type="journal article" date="1995" name="Gene">
        <title>Cloning, characterization and expression of two Xenopus bcl-2-like cell-survival genes.</title>
        <authorList>
            <person name="Cruz-Reyes J."/>
            <person name="Tata J.R."/>
        </authorList>
    </citation>
    <scope>NUCLEOTIDE SEQUENCE [MRNA]</scope>
    <source>
        <tissue>Head</tissue>
    </source>
</reference>
<comment type="function">
    <text>Could be the homolog of mammalian Bcl-W.</text>
</comment>
<comment type="subcellular location">
    <subcellularLocation>
        <location evidence="3">Membrane</location>
        <topology evidence="3">Single-pass membrane protein</topology>
    </subcellularLocation>
</comment>
<comment type="developmental stage">
    <text>Developmental regulation only occurs in the brain of mid-metamorphosic to post-metamorphosic tadpoles and adults, where an increase of several fold has been observed.</text>
</comment>
<comment type="similarity">
    <text evidence="3">Belongs to the Bcl-2 family.</text>
</comment>
<keyword id="KW-0053">Apoptosis</keyword>
<keyword id="KW-0472">Membrane</keyword>
<keyword id="KW-1185">Reference proteome</keyword>
<keyword id="KW-0812">Transmembrane</keyword>
<keyword id="KW-1133">Transmembrane helix</keyword>